<comment type="function">
    <text>Promotes colloidosmotic lysis by binding to the midgut epithelial cells of insects. Active on various scarabaeid beetles such as Anomala cuprea, A.rufocuprea and Popillia japonica.</text>
</comment>
<comment type="developmental stage">
    <text>The crystal protein is produced during sporulation and is accumulated both as an inclusion and as part of the spore coat.</text>
</comment>
<comment type="miscellaneous">
    <text>Toxic segment of the protein is located in the N-terminus.</text>
</comment>
<comment type="similarity">
    <text evidence="1">Belongs to the delta endotoxin family.</text>
</comment>
<organism>
    <name type="scientific">Bacillus thuringiensis subsp. japonensis</name>
    <dbReference type="NCBI Taxonomy" id="128936"/>
    <lineage>
        <taxon>Bacteria</taxon>
        <taxon>Bacillati</taxon>
        <taxon>Bacillota</taxon>
        <taxon>Bacilli</taxon>
        <taxon>Bacillales</taxon>
        <taxon>Bacillaceae</taxon>
        <taxon>Bacillus</taxon>
        <taxon>Bacillus cereus group</taxon>
    </lineage>
</organism>
<evidence type="ECO:0000305" key="1"/>
<gene>
    <name type="primary">cry8Ca</name>
    <name type="synonym">cryIII</name>
    <name type="synonym">cryVIIIC(a)</name>
</gene>
<proteinExistence type="evidence at protein level"/>
<name>CR8CA_BACTP</name>
<dbReference type="EMBL" id="U04366">
    <property type="protein sequence ID" value="AAA21119.1"/>
    <property type="molecule type" value="Genomic_DNA"/>
</dbReference>
<dbReference type="PIR" id="I40589">
    <property type="entry name" value="I40589"/>
</dbReference>
<dbReference type="RefSeq" id="WP_103653055.1">
    <property type="nucleotide sequence ID" value="NZ_PGDR01000108.1"/>
</dbReference>
<dbReference type="SMR" id="Q45706"/>
<dbReference type="GO" id="GO:0005102">
    <property type="term" value="F:signaling receptor binding"/>
    <property type="evidence" value="ECO:0007669"/>
    <property type="project" value="InterPro"/>
</dbReference>
<dbReference type="GO" id="GO:0090729">
    <property type="term" value="F:toxin activity"/>
    <property type="evidence" value="ECO:0007669"/>
    <property type="project" value="UniProtKB-KW"/>
</dbReference>
<dbReference type="GO" id="GO:0030435">
    <property type="term" value="P:sporulation resulting in formation of a cellular spore"/>
    <property type="evidence" value="ECO:0007669"/>
    <property type="project" value="UniProtKB-KW"/>
</dbReference>
<dbReference type="GO" id="GO:0001907">
    <property type="term" value="P:symbiont-mediated killing of host cell"/>
    <property type="evidence" value="ECO:0007669"/>
    <property type="project" value="InterPro"/>
</dbReference>
<dbReference type="CDD" id="cd04085">
    <property type="entry name" value="delta_endotoxin_C"/>
    <property type="match status" value="1"/>
</dbReference>
<dbReference type="Gene3D" id="2.60.120.260">
    <property type="entry name" value="Galactose-binding domain-like"/>
    <property type="match status" value="2"/>
</dbReference>
<dbReference type="Gene3D" id="2.100.10.10">
    <property type="entry name" value="Pesticidal crystal protein, central domain"/>
    <property type="match status" value="1"/>
</dbReference>
<dbReference type="Gene3D" id="1.20.190.10">
    <property type="entry name" value="Pesticidal crystal protein, N-terminal domain"/>
    <property type="match status" value="1"/>
</dbReference>
<dbReference type="InterPro" id="IPR048645">
    <property type="entry name" value="Cry1Ac-like_dom-VII"/>
</dbReference>
<dbReference type="InterPro" id="IPR041587">
    <property type="entry name" value="Cry_V"/>
</dbReference>
<dbReference type="InterPro" id="IPR008979">
    <property type="entry name" value="Galactose-bd-like_sf"/>
</dbReference>
<dbReference type="InterPro" id="IPR038979">
    <property type="entry name" value="Pest_crys"/>
</dbReference>
<dbReference type="InterPro" id="IPR005638">
    <property type="entry name" value="Pest_crys_dom-III"/>
</dbReference>
<dbReference type="InterPro" id="IPR005639">
    <property type="entry name" value="Pest_crys_dom_I"/>
</dbReference>
<dbReference type="InterPro" id="IPR036716">
    <property type="entry name" value="Pest_crys_N_sf"/>
</dbReference>
<dbReference type="InterPro" id="IPR036399">
    <property type="entry name" value="Pest_cryst_cen_dom_sf"/>
</dbReference>
<dbReference type="InterPro" id="IPR001178">
    <property type="entry name" value="Pest_cryst_dom_II"/>
</dbReference>
<dbReference type="PANTHER" id="PTHR37003">
    <property type="entry name" value="ENDOTOXIN_N DOMAIN-CONTAINING PROTEIN-RELATED"/>
    <property type="match status" value="1"/>
</dbReference>
<dbReference type="PANTHER" id="PTHR37003:SF2">
    <property type="entry name" value="PESTICIDAL CRYSTAL PROTEIN N-TERMINAL DOMAIN-CONTAINING PROTEIN"/>
    <property type="match status" value="1"/>
</dbReference>
<dbReference type="Pfam" id="PF17997">
    <property type="entry name" value="Cry1Ac_D5"/>
    <property type="match status" value="1"/>
</dbReference>
<dbReference type="Pfam" id="PF21463">
    <property type="entry name" value="Cry1Ac_dom-VII"/>
    <property type="match status" value="1"/>
</dbReference>
<dbReference type="Pfam" id="PF03944">
    <property type="entry name" value="Endotoxin_C"/>
    <property type="match status" value="1"/>
</dbReference>
<dbReference type="Pfam" id="PF00555">
    <property type="entry name" value="Endotoxin_M"/>
    <property type="match status" value="1"/>
</dbReference>
<dbReference type="Pfam" id="PF03945">
    <property type="entry name" value="Endotoxin_N"/>
    <property type="match status" value="1"/>
</dbReference>
<dbReference type="SUPFAM" id="SSF51096">
    <property type="entry name" value="delta-Endotoxin (insectocide), middle domain"/>
    <property type="match status" value="1"/>
</dbReference>
<dbReference type="SUPFAM" id="SSF56849">
    <property type="entry name" value="delta-Endotoxin (insectocide), N-terminal domain"/>
    <property type="match status" value="1"/>
</dbReference>
<dbReference type="SUPFAM" id="SSF49785">
    <property type="entry name" value="Galactose-binding domain-like"/>
    <property type="match status" value="2"/>
</dbReference>
<keyword id="KW-0903">Direct protein sequencing</keyword>
<keyword id="KW-0749">Sporulation</keyword>
<keyword id="KW-0800">Toxin</keyword>
<keyword id="KW-0843">Virulence</keyword>
<accession>Q45706</accession>
<protein>
    <recommendedName>
        <fullName>Pesticidal crystal protein Cry8Ca</fullName>
    </recommendedName>
    <alternativeName>
        <fullName>130 kDa crystal protein</fullName>
    </alternativeName>
    <alternativeName>
        <fullName>Crystaline entomocidal protoxin</fullName>
    </alternativeName>
    <alternativeName>
        <fullName>Insecticidal delta-endotoxin CryVIIIC(a)</fullName>
    </alternativeName>
</protein>
<reference key="1">
    <citation type="journal article" date="1994" name="Curr. Microbiol.">
        <title>Cloning, heterologous expression, and localization of a novel crystal protein gene from Bacillus thuringiensis serovar japonensis strain buibui toxic to scarabaeid insects.</title>
        <authorList>
            <person name="Sato R."/>
            <person name="Takeuchi K."/>
            <person name="Ogiwara K."/>
            <person name="Minami M."/>
            <person name="Kaji Y."/>
            <person name="Suzuki N."/>
            <person name="Hori H."/>
            <person name="Asano S."/>
            <person name="Ohba M."/>
            <person name="Iwahana H."/>
        </authorList>
    </citation>
    <scope>NUCLEOTIDE SEQUENCE [GENOMIC DNA]</scope>
    <source>
        <strain>Buibui</strain>
    </source>
</reference>
<reference key="2">
    <citation type="journal article" date="1994" name="J. Appl. Bacteriol.">
        <title>Characterization of larvicidal toxin protein from Bacillus thuringiensis serovar japonensis strain Buibui specific for scarabaeid beetles.</title>
        <authorList>
            <person name="Hori H."/>
            <person name="Suzuki N."/>
            <person name="Ogiwara K."/>
            <person name="Himejima M."/>
            <person name="Indrasith L.S."/>
            <person name="Minami M."/>
            <person name="Asano S."/>
            <person name="Sato R."/>
            <person name="Ohba M."/>
            <person name="Iwahana H."/>
        </authorList>
    </citation>
    <scope>PROTEIN SEQUENCE OF 1-14 AND 56-64</scope>
    <scope>CHARACTERIZATION</scope>
</reference>
<feature type="chain" id="PRO_0000174077" description="Pesticidal crystal protein Cry8Ca">
    <location>
        <begin position="1"/>
        <end position="1160"/>
    </location>
</feature>
<sequence length="1160" mass="130426">MSPNNQNEYEIIDALSPTSVSDNSIRYPLANDQTNTLQNMNYKDYLKMTESTNAELSRNPGTFISAQDAVGTGIDIVSTIISGLGIPVLGEVFSILGSLIGLLWPSNNENVWQIFMNRVEELIDQKILDSVRSRAIADLANSRIAVEYYQNALEDWRKNPHSTRSAALVKERFGNAEAILRTNMGSFSQTNYETPLLPTYAQAASLHLLVMRDVQIYGKEWGYPQNDIDLFYKEQVSYTARYSDHCVQWYNAGLNKLRGTGAKQWVDYNRFRREMNVMVLDLVALFPNYDARIYPLETNAELTREIFTDPVGSYVTGQSSTLISWYDMIPAALPSFSTLENLLRKPDFFTLLQEIRMYTSFRQNGTIEYYNYWGGQRLTLSYIYGSSFNKYSGVLAGAEDIIPVGQNDIYRVVWTYIGRYTNSLLGVNPVTFYFSNNTQKTYSKPKQFAGGIKTIDSGEELTYENYQSYSHRVSYITSFEIKSTGGTVLGVVPIFGWTHSSASRNNFIYATKISQIPINKASRTSGGAVWNFQEGLYNGGPVMKLSGSGSQVINLRVATDAKGASQRYRIRIRYASDRAGKFTISSRSPENPATYSASIAYTNTMSTNASLTYSTFAYAESGPINLGISGSSRTFDISITKEAGAANLYIDRIEFIPVNTLFEAEEDLDVAKKAVNGLFTNEKDALQTSVTDYQVNQAANLIECLSDELYPNEKRMLWDAVKEAKRLVQARNLLQDTGFNRINGENGWTGSTGIEVVEGDVLFKDRSLRLTSAREIDTETYPTYLYQQIDESLLKPYTRYKLKGFIGSSQDLEIKLIRHRANQIVKNVPDNLLPDVRPVNSCGGVDRCSEQQYVDANLALENNGENGNMSSDSHAFSFHIDTGEIDLNENTGIWIVFKIPTTNGNATLGNLEFVEEGPLSGETLEWAQQQEQQWQDKMARKRAASEKTYYAAKQAIDRLFADYQDQKLNSGVEMSDLLAAQNLVQSIPYVYNDALPEIPGMNYTSFTELTNRLQQAWNLYDLQNAIPNGDFRNGLSNWNATSDVNVQQLSDTSVLVIPNWNSQVSQQFTVQPNYRYVLRVTARKEGVGDGYVIIRDGANQTETLTFNICDDDTGVLSTDQTSYITKTVEFTPSTEQVWIDMSETEGVFNIESVELVLEEE</sequence>